<gene>
    <name type="primary">HRP65</name>
</gene>
<reference evidence="6" key="1">
    <citation type="journal article" date="2000" name="J. Cell Biol.">
        <title>Electron tomography reveals posttranscriptional binding of pre-mRNPs to specific fibers in the nucleoplasm.</title>
        <authorList>
            <person name="Miralles F."/>
            <person name="Oefverstedt L.-G."/>
            <person name="Sabri N."/>
            <person name="Aissouni Y."/>
            <person name="Hellman U."/>
            <person name="Skoglund U."/>
            <person name="Visa N."/>
        </authorList>
    </citation>
    <scope>NUCLEOTIDE SEQUENCE [MRNA] (ISOFORM 1)</scope>
    <scope>PROTEIN SEQUENCE OF 131-134; 149-154; 216-223; 226-236; 329-341 AND 382-389</scope>
    <scope>DEVELOPMENTAL STAGE</scope>
    <source>
        <tissue>Salivary gland</tissue>
    </source>
</reference>
<reference evidence="6" key="2">
    <citation type="journal article" date="2001" name="Exp. Cell Res.">
        <title>Molecular characterization of Ct-hrp65: identification of two novel isoforms originated by alternative splicing.</title>
        <authorList>
            <person name="Miralles F."/>
            <person name="Visa N."/>
        </authorList>
    </citation>
    <scope>NUCLEOTIDE SEQUENCE (ISOFORMS 1; 2 AND 3)</scope>
    <scope>SUBCELLULAR LOCATION</scope>
    <source>
        <tissue>Salivary gland</tissue>
    </source>
</reference>
<organism evidence="7">
    <name type="scientific">Chironomus tentans</name>
    <name type="common">Midge</name>
    <name type="synonym">Camptochironomus tentans</name>
    <dbReference type="NCBI Taxonomy" id="7153"/>
    <lineage>
        <taxon>Eukaryota</taxon>
        <taxon>Metazoa</taxon>
        <taxon>Ecdysozoa</taxon>
        <taxon>Arthropoda</taxon>
        <taxon>Hexapoda</taxon>
        <taxon>Insecta</taxon>
        <taxon>Pterygota</taxon>
        <taxon>Neoptera</taxon>
        <taxon>Endopterygota</taxon>
        <taxon>Diptera</taxon>
        <taxon>Nematocera</taxon>
        <taxon>Chironomoidea</taxon>
        <taxon>Chironomidae</taxon>
        <taxon>Chironominae</taxon>
        <taxon>Chironomus</taxon>
    </lineage>
</organism>
<sequence>MDVKAEAPNGPAPVKNENQNQPKPQRENMNMNKNQNQNQNNNMGGGGGPNKRNNMNMNKNFQNRGGKGGPGMGPRGPMKNEDFIVNSKLKNLAGPTHDLPELVCEEIKFSGRNRLYIGNLTSDVTEEELKELFSPYGEISEAFINAEKNFAFLKIDYRANAERAKKDLDGRMRKNKPIRIRFAPNATTIRVKNLTPFVSNELLFKSFEVFGQVERAVIIVDDRGKTTGEGIVEFARKSGAMSALKYCSEKCYFLTSSLRPCVVETFDHIDETDGFPEKSLMRKSNDYYKARQNGPRFAEMGSFEHEFGTKWKQMYDMYKQKHDALKREMQLEEEKLEAQMEYAKFEHETESLREQLRKREQDRDRQKKEWEDRERQADESRIRDEQQMRRQQDDMQMRMQRQDEEMRRRQQENSLFMQAQQLSNMLDQQEMNHQGGGGGGGNGGNGNNQGGGGNQGGGRRNYNNDRNNDRNQNFDMMNQGGGNHGGNQYQGNQHYQGNQDQGNRFDGPPQRGNVRPWNNNDRGHRDDFQNKRRRY</sequence>
<dbReference type="EMBL" id="AJ243013">
    <property type="protein sequence ID" value="CAB64926.1"/>
    <property type="molecule type" value="mRNA"/>
</dbReference>
<dbReference type="EMBL" id="AJ404654">
    <property type="protein sequence ID" value="CAC42829.1"/>
    <property type="molecule type" value="Genomic_DNA"/>
</dbReference>
<dbReference type="EMBL" id="AJ404654">
    <property type="protein sequence ID" value="CAC42828.1"/>
    <property type="molecule type" value="Genomic_DNA"/>
</dbReference>
<dbReference type="EMBL" id="AJ404654">
    <property type="protein sequence ID" value="CAC42830.1"/>
    <property type="molecule type" value="Genomic_DNA"/>
</dbReference>
<dbReference type="SMR" id="Q9U1N0"/>
<dbReference type="GO" id="GO:0005737">
    <property type="term" value="C:cytoplasm"/>
    <property type="evidence" value="ECO:0000314"/>
    <property type="project" value="UniProtKB"/>
</dbReference>
<dbReference type="GO" id="GO:0005856">
    <property type="term" value="C:cytoskeleton"/>
    <property type="evidence" value="ECO:0007669"/>
    <property type="project" value="UniProtKB-SubCell"/>
</dbReference>
<dbReference type="GO" id="GO:0005634">
    <property type="term" value="C:nucleus"/>
    <property type="evidence" value="ECO:0000314"/>
    <property type="project" value="UniProtKB"/>
</dbReference>
<dbReference type="GO" id="GO:0003723">
    <property type="term" value="F:RNA binding"/>
    <property type="evidence" value="ECO:0000303"/>
    <property type="project" value="UniProtKB"/>
</dbReference>
<dbReference type="GO" id="GO:0006406">
    <property type="term" value="P:mRNA export from nucleus"/>
    <property type="evidence" value="ECO:0000303"/>
    <property type="project" value="UniProtKB"/>
</dbReference>
<dbReference type="CDD" id="cd12945">
    <property type="entry name" value="NOPS_NONA_like"/>
    <property type="match status" value="1"/>
</dbReference>
<dbReference type="CDD" id="cd12332">
    <property type="entry name" value="RRM1_p54nrb_like"/>
    <property type="match status" value="1"/>
</dbReference>
<dbReference type="CDD" id="cd12333">
    <property type="entry name" value="RRM2_p54nrb_like"/>
    <property type="match status" value="1"/>
</dbReference>
<dbReference type="FunFam" id="3.30.70.330:FF:000043">
    <property type="entry name" value="paraspeckle component 1 isoform X1"/>
    <property type="match status" value="1"/>
</dbReference>
<dbReference type="FunFam" id="3.30.70.330:FF:000513">
    <property type="entry name" value="Splicing factor, proline-and glutamine-rich"/>
    <property type="match status" value="1"/>
</dbReference>
<dbReference type="Gene3D" id="3.30.70.330">
    <property type="match status" value="2"/>
</dbReference>
<dbReference type="Gene3D" id="6.10.250.1170">
    <property type="match status" value="1"/>
</dbReference>
<dbReference type="InterPro" id="IPR012975">
    <property type="entry name" value="NOPS"/>
</dbReference>
<dbReference type="InterPro" id="IPR012677">
    <property type="entry name" value="Nucleotide-bd_a/b_plait_sf"/>
</dbReference>
<dbReference type="InterPro" id="IPR035979">
    <property type="entry name" value="RBD_domain_sf"/>
</dbReference>
<dbReference type="InterPro" id="IPR000504">
    <property type="entry name" value="RRM_dom"/>
</dbReference>
<dbReference type="PANTHER" id="PTHR23189">
    <property type="entry name" value="RNA RECOGNITION MOTIF-CONTAINING"/>
    <property type="match status" value="1"/>
</dbReference>
<dbReference type="Pfam" id="PF08075">
    <property type="entry name" value="NOPS"/>
    <property type="match status" value="1"/>
</dbReference>
<dbReference type="Pfam" id="PF00076">
    <property type="entry name" value="RRM_1"/>
    <property type="match status" value="2"/>
</dbReference>
<dbReference type="SMART" id="SM00360">
    <property type="entry name" value="RRM"/>
    <property type="match status" value="2"/>
</dbReference>
<dbReference type="SUPFAM" id="SSF54928">
    <property type="entry name" value="RNA-binding domain, RBD"/>
    <property type="match status" value="1"/>
</dbReference>
<dbReference type="PROSITE" id="PS50102">
    <property type="entry name" value="RRM"/>
    <property type="match status" value="2"/>
</dbReference>
<protein>
    <recommendedName>
        <fullName>Hrp65 protein</fullName>
    </recommendedName>
    <alternativeName>
        <fullName>Ct-Hrp65</fullName>
    </alternativeName>
</protein>
<evidence type="ECO:0000255" key="1">
    <source>
        <dbReference type="PROSITE-ProRule" id="PRU00176"/>
    </source>
</evidence>
<evidence type="ECO:0000256" key="2">
    <source>
        <dbReference type="SAM" id="MobiDB-lite"/>
    </source>
</evidence>
<evidence type="ECO:0000269" key="3">
    <source>
    </source>
</evidence>
<evidence type="ECO:0000269" key="4">
    <source>
    </source>
</evidence>
<evidence type="ECO:0000303" key="5">
    <source>
    </source>
</evidence>
<evidence type="ECO:0000305" key="6"/>
<evidence type="ECO:0000312" key="7">
    <source>
        <dbReference type="EMBL" id="CAB64926.1"/>
    </source>
</evidence>
<feature type="chain" id="PRO_0000081611" description="Hrp65 protein">
    <location>
        <begin position="1"/>
        <end position="535"/>
    </location>
</feature>
<feature type="domain" description="RRM 1" evidence="1">
    <location>
        <begin position="113"/>
        <end position="185"/>
    </location>
</feature>
<feature type="domain" description="RRM 2" evidence="1">
    <location>
        <begin position="187"/>
        <end position="268"/>
    </location>
</feature>
<feature type="region of interest" description="Disordered" evidence="2">
    <location>
        <begin position="1"/>
        <end position="80"/>
    </location>
</feature>
<feature type="region of interest" description="Disordered" evidence="2">
    <location>
        <begin position="346"/>
        <end position="411"/>
    </location>
</feature>
<feature type="region of interest" description="Disordered" evidence="2">
    <location>
        <begin position="429"/>
        <end position="535"/>
    </location>
</feature>
<feature type="compositionally biased region" description="Low complexity" evidence="2">
    <location>
        <begin position="27"/>
        <end position="42"/>
    </location>
</feature>
<feature type="compositionally biased region" description="Low complexity" evidence="2">
    <location>
        <begin position="50"/>
        <end position="64"/>
    </location>
</feature>
<feature type="compositionally biased region" description="Gly residues" evidence="2">
    <location>
        <begin position="65"/>
        <end position="74"/>
    </location>
</feature>
<feature type="compositionally biased region" description="Gly residues" evidence="2">
    <location>
        <begin position="434"/>
        <end position="459"/>
    </location>
</feature>
<feature type="compositionally biased region" description="Low complexity" evidence="2">
    <location>
        <begin position="486"/>
        <end position="502"/>
    </location>
</feature>
<feature type="compositionally biased region" description="Basic and acidic residues" evidence="2">
    <location>
        <begin position="521"/>
        <end position="535"/>
    </location>
</feature>
<feature type="splice variant" id="VSP_050278" description="In isoform 2." evidence="5">
    <original>DQGNRFDGPPQRGNVRPWNNNDRGHRDDFQNKRRRY</original>
    <variation>YYRPYVNQRPQKARYRNG</variation>
    <location>
        <begin position="500"/>
        <end position="535"/>
    </location>
</feature>
<feature type="splice variant" id="VSP_050279" description="In isoform 3." evidence="5">
    <original>DQGNRFDGPPQRGNVRPWNNNDRGHRDDFQNKRRRY</original>
    <variation>KINNYKSTLKNLI</variation>
    <location>
        <begin position="500"/>
        <end position="535"/>
    </location>
</feature>
<name>HRP65_CHITE</name>
<proteinExistence type="evidence at protein level"/>
<accession>Q9U1N0</accession>
<accession>Q95ZG9</accession>
<accession>Q95ZH0</accession>
<keyword id="KW-0025">Alternative splicing</keyword>
<keyword id="KW-0963">Cytoplasm</keyword>
<keyword id="KW-0206">Cytoskeleton</keyword>
<keyword id="KW-0903">Direct protein sequencing</keyword>
<keyword id="KW-0539">Nucleus</keyword>
<keyword id="KW-0677">Repeat</keyword>
<keyword id="KW-0694">RNA-binding</keyword>
<comment type="function">
    <text>Component of nuclear connecting fibers associated with the transport of ribonucleoprotein particles from either the chromosome to the nuclear pore complex or their transient retention in the nucleoplasm.</text>
</comment>
<comment type="subcellular location">
    <molecule>Isoform 3</molecule>
    <subcellularLocation>
        <location>Cytoplasm</location>
        <location>Cytoskeleton</location>
    </subcellularLocation>
</comment>
<comment type="subcellular location">
    <molecule>Isoform 2</molecule>
    <subcellularLocation>
        <location>Cytoplasm</location>
    </subcellularLocation>
</comment>
<comment type="subcellular location">
    <molecule>Isoform 1</molecule>
    <subcellularLocation>
        <location>Nucleus</location>
    </subcellularLocation>
</comment>
<comment type="alternative products">
    <event type="alternative splicing"/>
    <isoform>
        <id>Q9U1N0-1</id>
        <name evidence="4">1</name>
        <sequence type="displayed"/>
    </isoform>
    <isoform>
        <id>Q9U1N0-2</id>
        <name evidence="4">2</name>
        <sequence type="described" ref="VSP_050278"/>
    </isoform>
    <isoform>
        <id>Q9U1N0-3</id>
        <name evidence="4">3</name>
        <sequence type="described" ref="VSP_050279"/>
    </isoform>
</comment>
<comment type="developmental stage">
    <text evidence="3 4">Isoforms 1 and 2 are expressed in embryo, larva and adult while isoform 3 is expressed only in embryo.</text>
</comment>